<keyword id="KW-0131">Cell cycle</keyword>
<keyword id="KW-0963">Cytoplasm</keyword>
<keyword id="KW-0206">Cytoskeleton</keyword>
<keyword id="KW-0378">Hydrolase</keyword>
<keyword id="KW-0464">Manganese</keyword>
<keyword id="KW-0479">Metal-binding</keyword>
<keyword id="KW-0904">Protein phosphatase</keyword>
<keyword id="KW-1185">Reference proteome</keyword>
<organism>
    <name type="scientific">Caenorhabditis elegans</name>
    <dbReference type="NCBI Taxonomy" id="6239"/>
    <lineage>
        <taxon>Eukaryota</taxon>
        <taxon>Metazoa</taxon>
        <taxon>Ecdysozoa</taxon>
        <taxon>Nematoda</taxon>
        <taxon>Chromadorea</taxon>
        <taxon>Rhabditida</taxon>
        <taxon>Rhabditina</taxon>
        <taxon>Rhabditomorpha</taxon>
        <taxon>Rhabditoidea</taxon>
        <taxon>Rhabditidae</taxon>
        <taxon>Peloderinae</taxon>
        <taxon>Caenorhabditis</taxon>
    </lineage>
</organism>
<evidence type="ECO:0000250" key="1">
    <source>
        <dbReference type="UniProtKB" id="O00743"/>
    </source>
</evidence>
<evidence type="ECO:0000250" key="2">
    <source>
        <dbReference type="UniProtKB" id="P36873"/>
    </source>
</evidence>
<evidence type="ECO:0000269" key="3">
    <source>
    </source>
</evidence>
<evidence type="ECO:0000303" key="4">
    <source>
    </source>
</evidence>
<evidence type="ECO:0000305" key="5"/>
<evidence type="ECO:0000312" key="6">
    <source>
        <dbReference type="WormBase" id="C34C12.3"/>
    </source>
</evidence>
<sequence>MIDTNLLRVTVCDEGELEKSTTHFIGSRKIEPEQWITWASECKYLPESDAVALCATLIDRLSLEANVVPVSSPVTICGDIHGQFYDLLELFKTGGTVPNTKYVFMGDYVDRGHYSLETVTLLFCLLLKYPNQITLLRGNHESRRISNVYGFYDECQNKYGHGNVHKWFCKVFDVLPIGALIDESVLCVHGGLSPDIRTIDSLMLLDRAQEVPNKGPLCDIMWSDPDDDVEDWVISQRGAGFVFGAKVTEEFLMNNDLSLLCRSHQLVDEGFKYMFNEKLATVWSAPNYCYRCGNAAAVFEIDGNNRSTKYFNAVPDGSREKPDRVVAPYFL</sequence>
<comment type="function">
    <text evidence="1 3">Catalytic subunit of protein phosphatase 6 (PP6) (By similarity). In complex with saps-1, promotes actomyosin contractility during cytokinesis by regulating the organization of cortical non-muscle myosin II nmy-2 and thus contributing to correct spindle positioning (PubMed:20040490). Also required for the proper generation of pulling forces on spindle poles during anaphase by regulating the cortical localization of gpr-1, gpr-2 and lin-5 (PubMed:20040490).</text>
</comment>
<comment type="catalytic activity">
    <reaction evidence="1">
        <text>O-phospho-L-seryl-[protein] + H2O = L-seryl-[protein] + phosphate</text>
        <dbReference type="Rhea" id="RHEA:20629"/>
        <dbReference type="Rhea" id="RHEA-COMP:9863"/>
        <dbReference type="Rhea" id="RHEA-COMP:11604"/>
        <dbReference type="ChEBI" id="CHEBI:15377"/>
        <dbReference type="ChEBI" id="CHEBI:29999"/>
        <dbReference type="ChEBI" id="CHEBI:43474"/>
        <dbReference type="ChEBI" id="CHEBI:83421"/>
        <dbReference type="EC" id="3.1.3.16"/>
    </reaction>
</comment>
<comment type="catalytic activity">
    <reaction evidence="1">
        <text>O-phospho-L-threonyl-[protein] + H2O = L-threonyl-[protein] + phosphate</text>
        <dbReference type="Rhea" id="RHEA:47004"/>
        <dbReference type="Rhea" id="RHEA-COMP:11060"/>
        <dbReference type="Rhea" id="RHEA-COMP:11605"/>
        <dbReference type="ChEBI" id="CHEBI:15377"/>
        <dbReference type="ChEBI" id="CHEBI:30013"/>
        <dbReference type="ChEBI" id="CHEBI:43474"/>
        <dbReference type="ChEBI" id="CHEBI:61977"/>
        <dbReference type="EC" id="3.1.3.16"/>
    </reaction>
</comment>
<comment type="cofactor">
    <cofactor evidence="2">
        <name>Mn(2+)</name>
        <dbReference type="ChEBI" id="CHEBI:29035"/>
    </cofactor>
    <text evidence="2">Binds 2 manganese ions per subunit.</text>
</comment>
<comment type="subunit">
    <text evidence="3">Forms a complex composed of catalytic subunit pph-6 and regulatory subunit saps-1; the interaction increases pph-6 and saps-1 protein stability.</text>
</comment>
<comment type="subcellular location">
    <subcellularLocation>
        <location evidence="3">Cytoplasm</location>
    </subcellularLocation>
    <subcellularLocation>
        <location evidence="3">Cytoplasm</location>
        <location evidence="3">Cell cortex</location>
    </subcellularLocation>
    <subcellularLocation>
        <location evidence="3">Cytoplasm</location>
        <location evidence="3">Cytoskeleton</location>
    </subcellularLocation>
    <subcellularLocation>
        <location evidence="3">Cytoplasm</location>
        <location evidence="3">Cytoskeleton</location>
        <location evidence="3">Spindle pole</location>
    </subcellularLocation>
    <text evidence="3">In embryos, localizes mainly to the cytoplasm and to a lesser extent with microtubule asters.</text>
</comment>
<comment type="developmental stage">
    <text evidence="3">Expressed in embryos.</text>
</comment>
<comment type="disruption phenotype">
    <text evidence="3">RNAi-mediated knockdown causes lethality in 17 percent of animals. In the 1-cell embryo, cortical contractions are severely reduced and the pseudocleavage furrow is absent. Positioning of the spindle is abnormal due to reduced pulling forces that prevent oscillatory movements of the posterior spindle pole during anaphase. In 15 percent of animals, causes defects in chromosome segregation resulting in daughter cells with multiple nuclei.</text>
</comment>
<comment type="similarity">
    <text evidence="5">Belongs to the PPP phosphatase family. PP-6 (PP-V) subfamily.</text>
</comment>
<proteinExistence type="evidence at protein level"/>
<reference key="1">
    <citation type="journal article" date="1998" name="Science">
        <title>Genome sequence of the nematode C. elegans: a platform for investigating biology.</title>
        <authorList>
            <consortium name="The C. elegans sequencing consortium"/>
        </authorList>
    </citation>
    <scope>NUCLEOTIDE SEQUENCE [LARGE SCALE GENOMIC DNA]</scope>
    <source>
        <strain>Bristol N2</strain>
    </source>
</reference>
<reference key="2">
    <citation type="journal article" date="2010" name="Development">
        <title>Regulation of cortical contractility and spindle positioning by the protein phosphatase 6 PPH-6 in one-cell stage C. elegans embryos.</title>
        <authorList>
            <person name="Afshar K."/>
            <person name="Werner M.E."/>
            <person name="Tse Y.C."/>
            <person name="Glotzer M."/>
            <person name="Goenczy P."/>
        </authorList>
    </citation>
    <scope>FUNCTION</scope>
    <scope>IDENTIFICATION IN A COMPLEX WITH SAPS-1</scope>
    <scope>SUBCELLULAR LOCATION</scope>
    <scope>DEVELOPMENTAL STAGE</scope>
    <scope>DISRUPTION PHENOTYPE</scope>
</reference>
<reference key="3">
    <citation type="journal article" date="2016" name="Development">
        <authorList>
            <person name="Afshar K."/>
            <person name="Werner M.E."/>
            <person name="Tse Y.C."/>
            <person name="Glotzer M."/>
            <person name="Goenczy P."/>
        </authorList>
    </citation>
    <scope>ERRATUM OF PUBMED:20040490</scope>
</reference>
<accession>Q09496</accession>
<dbReference type="EC" id="3.1.3.16" evidence="1"/>
<dbReference type="EMBL" id="BX284603">
    <property type="protein sequence ID" value="CAA87100.2"/>
    <property type="molecule type" value="Genomic_DNA"/>
</dbReference>
<dbReference type="PIR" id="T19701">
    <property type="entry name" value="T19701"/>
</dbReference>
<dbReference type="RefSeq" id="NP_497714.2">
    <property type="nucleotide sequence ID" value="NM_065313.5"/>
</dbReference>
<dbReference type="SMR" id="Q09496"/>
<dbReference type="BioGRID" id="48030">
    <property type="interactions" value="5"/>
</dbReference>
<dbReference type="ComplexPortal" id="CPX-4025">
    <property type="entry name" value="pph-6-saps-1 phosphatase complex"/>
</dbReference>
<dbReference type="FunCoup" id="Q09496">
    <property type="interactions" value="2502"/>
</dbReference>
<dbReference type="IntAct" id="Q09496">
    <property type="interactions" value="1"/>
</dbReference>
<dbReference type="STRING" id="6239.C34C12.3.1"/>
<dbReference type="PaxDb" id="6239-C34C12.3"/>
<dbReference type="PeptideAtlas" id="Q09496"/>
<dbReference type="EnsemblMetazoa" id="C34C12.3.1">
    <property type="protein sequence ID" value="C34C12.3.1"/>
    <property type="gene ID" value="WBGene00007922"/>
</dbReference>
<dbReference type="GeneID" id="183199"/>
<dbReference type="KEGG" id="cel:CELE_C34C12.3"/>
<dbReference type="UCSC" id="C34C12.3">
    <property type="organism name" value="c. elegans"/>
</dbReference>
<dbReference type="AGR" id="WB:WBGene00007922"/>
<dbReference type="CTD" id="183199"/>
<dbReference type="WormBase" id="C34C12.3">
    <property type="protein sequence ID" value="CE31433"/>
    <property type="gene ID" value="WBGene00007922"/>
    <property type="gene designation" value="pph-6"/>
</dbReference>
<dbReference type="eggNOG" id="KOG0373">
    <property type="taxonomic scope" value="Eukaryota"/>
</dbReference>
<dbReference type="GeneTree" id="ENSGT00550000074961"/>
<dbReference type="HOGENOM" id="CLU_004962_8_1_1"/>
<dbReference type="InParanoid" id="Q09496"/>
<dbReference type="OMA" id="MCLKVKY"/>
<dbReference type="OrthoDB" id="1930084at2759"/>
<dbReference type="PhylomeDB" id="Q09496"/>
<dbReference type="PRO" id="PR:Q09496"/>
<dbReference type="Proteomes" id="UP000001940">
    <property type="component" value="Chromosome III"/>
</dbReference>
<dbReference type="Bgee" id="WBGene00007922">
    <property type="expression patterns" value="Expressed in embryo and 4 other cell types or tissues"/>
</dbReference>
<dbReference type="GO" id="GO:0000235">
    <property type="term" value="C:astral microtubule"/>
    <property type="evidence" value="ECO:0000314"/>
    <property type="project" value="WormBase"/>
</dbReference>
<dbReference type="GO" id="GO:0005938">
    <property type="term" value="C:cell cortex"/>
    <property type="evidence" value="ECO:0000314"/>
    <property type="project" value="WormBase"/>
</dbReference>
<dbReference type="GO" id="GO:0005737">
    <property type="term" value="C:cytoplasm"/>
    <property type="evidence" value="ECO:0000314"/>
    <property type="project" value="WormBase"/>
</dbReference>
<dbReference type="GO" id="GO:1903293">
    <property type="term" value="C:phosphatase complex"/>
    <property type="evidence" value="ECO:0000353"/>
    <property type="project" value="ComplexPortal"/>
</dbReference>
<dbReference type="GO" id="GO:0000922">
    <property type="term" value="C:spindle pole"/>
    <property type="evidence" value="ECO:0007669"/>
    <property type="project" value="UniProtKB-SubCell"/>
</dbReference>
<dbReference type="GO" id="GO:0046872">
    <property type="term" value="F:metal ion binding"/>
    <property type="evidence" value="ECO:0007669"/>
    <property type="project" value="UniProtKB-KW"/>
</dbReference>
<dbReference type="GO" id="GO:0004722">
    <property type="term" value="F:protein serine/threonine phosphatase activity"/>
    <property type="evidence" value="ECO:0000318"/>
    <property type="project" value="GO_Central"/>
</dbReference>
<dbReference type="GO" id="GO:0000916">
    <property type="term" value="P:actomyosin contractile ring contraction"/>
    <property type="evidence" value="ECO:0000303"/>
    <property type="project" value="ComplexPortal"/>
</dbReference>
<dbReference type="GO" id="GO:0030866">
    <property type="term" value="P:cortical actin cytoskeleton organization"/>
    <property type="evidence" value="ECO:0000315"/>
    <property type="project" value="WormBase"/>
</dbReference>
<dbReference type="GO" id="GO:0040001">
    <property type="term" value="P:establishment of mitotic spindle localization"/>
    <property type="evidence" value="ECO:0000315"/>
    <property type="project" value="WormBase"/>
</dbReference>
<dbReference type="GO" id="GO:0030590">
    <property type="term" value="P:first cell cycle pseudocleavage"/>
    <property type="evidence" value="ECO:0000315"/>
    <property type="project" value="WormBase"/>
</dbReference>
<dbReference type="GO" id="GO:0000082">
    <property type="term" value="P:G1/S transition of mitotic cell cycle"/>
    <property type="evidence" value="ECO:0000318"/>
    <property type="project" value="GO_Central"/>
</dbReference>
<dbReference type="GO" id="GO:0045931">
    <property type="term" value="P:positive regulation of mitotic cell cycle"/>
    <property type="evidence" value="ECO:0000303"/>
    <property type="project" value="ComplexPortal"/>
</dbReference>
<dbReference type="GO" id="GO:0051653">
    <property type="term" value="P:spindle localization"/>
    <property type="evidence" value="ECO:0000303"/>
    <property type="project" value="ComplexPortal"/>
</dbReference>
<dbReference type="CDD" id="cd07415">
    <property type="entry name" value="MPP_PP2A_PP4_PP6"/>
    <property type="match status" value="1"/>
</dbReference>
<dbReference type="FunFam" id="3.60.21.10:FF:000040">
    <property type="entry name" value="Serine/threonine-protein phosphatase"/>
    <property type="match status" value="1"/>
</dbReference>
<dbReference type="Gene3D" id="3.60.21.10">
    <property type="match status" value="1"/>
</dbReference>
<dbReference type="InterPro" id="IPR004843">
    <property type="entry name" value="Calcineurin-like_PHP_ApaH"/>
</dbReference>
<dbReference type="InterPro" id="IPR029052">
    <property type="entry name" value="Metallo-depent_PP-like"/>
</dbReference>
<dbReference type="InterPro" id="IPR047129">
    <property type="entry name" value="PPA2-like"/>
</dbReference>
<dbReference type="InterPro" id="IPR006186">
    <property type="entry name" value="Ser/Thr-sp_prot-phosphatase"/>
</dbReference>
<dbReference type="PANTHER" id="PTHR45619">
    <property type="entry name" value="SERINE/THREONINE-PROTEIN PHOSPHATASE PP2A-RELATED"/>
    <property type="match status" value="1"/>
</dbReference>
<dbReference type="Pfam" id="PF00149">
    <property type="entry name" value="Metallophos"/>
    <property type="match status" value="1"/>
</dbReference>
<dbReference type="PRINTS" id="PR00114">
    <property type="entry name" value="STPHPHTASE"/>
</dbReference>
<dbReference type="SMART" id="SM00156">
    <property type="entry name" value="PP2Ac"/>
    <property type="match status" value="1"/>
</dbReference>
<dbReference type="SUPFAM" id="SSF56300">
    <property type="entry name" value="Metallo-dependent phosphatases"/>
    <property type="match status" value="1"/>
</dbReference>
<dbReference type="PROSITE" id="PS00125">
    <property type="entry name" value="SER_THR_PHOSPHATASE"/>
    <property type="match status" value="1"/>
</dbReference>
<name>PPP6_CAEEL</name>
<feature type="chain" id="PRO_0000058917" description="Serine/threonine-protein phosphatase 6 catalytic subunit">
    <location>
        <begin position="1"/>
        <end position="331"/>
    </location>
</feature>
<feature type="active site" description="Proton donor" evidence="2">
    <location>
        <position position="140"/>
    </location>
</feature>
<feature type="binding site" evidence="2">
    <location>
        <position position="79"/>
    </location>
    <ligand>
        <name>Mn(2+)</name>
        <dbReference type="ChEBI" id="CHEBI:29035"/>
        <label>1</label>
    </ligand>
</feature>
<feature type="binding site" evidence="2">
    <location>
        <position position="81"/>
    </location>
    <ligand>
        <name>Mn(2+)</name>
        <dbReference type="ChEBI" id="CHEBI:29035"/>
        <label>1</label>
    </ligand>
</feature>
<feature type="binding site" evidence="2">
    <location>
        <position position="107"/>
    </location>
    <ligand>
        <name>Mn(2+)</name>
        <dbReference type="ChEBI" id="CHEBI:29035"/>
        <label>1</label>
    </ligand>
</feature>
<feature type="binding site" evidence="2">
    <location>
        <position position="107"/>
    </location>
    <ligand>
        <name>Mn(2+)</name>
        <dbReference type="ChEBI" id="CHEBI:29035"/>
        <label>2</label>
    </ligand>
</feature>
<feature type="binding site" evidence="2">
    <location>
        <position position="139"/>
    </location>
    <ligand>
        <name>Mn(2+)</name>
        <dbReference type="ChEBI" id="CHEBI:29035"/>
        <label>2</label>
    </ligand>
</feature>
<feature type="binding site" evidence="2">
    <location>
        <position position="189"/>
    </location>
    <ligand>
        <name>Mn(2+)</name>
        <dbReference type="ChEBI" id="CHEBI:29035"/>
        <label>2</label>
    </ligand>
</feature>
<feature type="binding site" evidence="2">
    <location>
        <position position="264"/>
    </location>
    <ligand>
        <name>Mn(2+)</name>
        <dbReference type="ChEBI" id="CHEBI:29035"/>
        <label>2</label>
    </ligand>
</feature>
<protein>
    <recommendedName>
        <fullName evidence="5">Serine/threonine-protein phosphatase 6 catalytic subunit</fullName>
        <ecNumber evidence="1">3.1.3.16</ecNumber>
    </recommendedName>
    <alternativeName>
        <fullName evidence="4">Protein phosphatase pph-6</fullName>
    </alternativeName>
</protein>
<gene>
    <name evidence="4 6" type="primary">pph-6</name>
    <name evidence="6" type="ORF">C34C12.3</name>
</gene>